<proteinExistence type="evidence at protein level"/>
<protein>
    <recommendedName>
        <fullName evidence="1 5">Cobyrinate a,c-diamide synthase</fullName>
        <ecNumber evidence="1">6.3.5.11</ecNumber>
    </recommendedName>
    <alternativeName>
        <fullName evidence="1 3">Cobyrinic acid a,c-diamide synthetase</fullName>
    </alternativeName>
    <component>
        <recommendedName>
            <fullName evidence="5">Cobyrinate a,c-diamide synthase, N-terminally processed</fullName>
        </recommendedName>
    </component>
</protein>
<reference key="1">
    <citation type="journal article" date="1993" name="J. Bacteriol.">
        <title>Characterization of the cobalamin (vitamin B12) biosynthetic genes of Salmonella typhimurium.</title>
        <authorList>
            <person name="Roth J.R."/>
            <person name="Lawrence J.G."/>
            <person name="Rubenfield M."/>
            <person name="Kieffer-Higgins S."/>
            <person name="Church G.M."/>
        </authorList>
    </citation>
    <scope>NUCLEOTIDE SEQUENCE [GENOMIC DNA]</scope>
    <source>
        <strain>LT2</strain>
    </source>
</reference>
<reference key="2">
    <citation type="journal article" date="2001" name="Nature">
        <title>Complete genome sequence of Salmonella enterica serovar Typhimurium LT2.</title>
        <authorList>
            <person name="McClelland M."/>
            <person name="Sanderson K.E."/>
            <person name="Spieth J."/>
            <person name="Clifton S.W."/>
            <person name="Latreille P."/>
            <person name="Courtney L."/>
            <person name="Porwollik S."/>
            <person name="Ali J."/>
            <person name="Dante M."/>
            <person name="Du F."/>
            <person name="Hou S."/>
            <person name="Layman D."/>
            <person name="Leonard S."/>
            <person name="Nguyen C."/>
            <person name="Scott K."/>
            <person name="Holmes A."/>
            <person name="Grewal N."/>
            <person name="Mulvaney E."/>
            <person name="Ryan E."/>
            <person name="Sun H."/>
            <person name="Florea L."/>
            <person name="Miller W."/>
            <person name="Stoneking T."/>
            <person name="Nhan M."/>
            <person name="Waterston R."/>
            <person name="Wilson R.K."/>
        </authorList>
    </citation>
    <scope>NUCLEOTIDE SEQUENCE [LARGE SCALE GENOMIC DNA]</scope>
    <source>
        <strain>LT2 / SGSC1412 / ATCC 700720</strain>
    </source>
</reference>
<reference key="3">
    <citation type="journal article" date="1992" name="Mol. Microbiol.">
        <title>Cobalamin (vitamin B12) repression of the Cob operon in Salmonella typhimurium requires sequences within the leader and the first translated open reading frame.</title>
        <authorList>
            <person name="Richter-Dahlfors A.A."/>
            <person name="Andersson D.I."/>
        </authorList>
    </citation>
    <scope>NUCLEOTIDE SEQUENCE [GENOMIC DNA] OF 1-106</scope>
    <source>
        <strain>LT2</strain>
    </source>
</reference>
<reference key="4">
    <citation type="journal article" date="2004" name="Biochemistry">
        <title>Mechanism of cobyrinic acid a,c-diamide synthetase from Salmonella typhimurium LT2.</title>
        <authorList>
            <person name="Fresquet V."/>
            <person name="Williams L."/>
            <person name="Raushel F.M."/>
        </authorList>
    </citation>
    <scope>PROTEIN SEQUENCE OF 2-7</scope>
    <scope>FUNCTION</scope>
    <scope>CATALYTIC ACTIVITY</scope>
    <scope>SUBSTRATE SPECIFICITY</scope>
    <scope>BIOPHYSICOCHEMICAL PROPERTIES</scope>
    <scope>SUBUNIT</scope>
    <scope>DOMAIN</scope>
    <scope>REACTION MECHANISM</scope>
    <scope>MUTAGENESIS OF ASP-45; TYR-46; LEU-47; ASP-48; GLU-90 AND ASP-97</scope>
    <source>
        <strain>LT2 / SGSC1412 / ATCC 700720</strain>
    </source>
</reference>
<feature type="chain" id="PRO_0000141269" description="Cobyrinate a,c-diamide synthase">
    <location>
        <begin position="1"/>
        <end position="459"/>
    </location>
</feature>
<feature type="initiator methionine" description="Removed; alternate" evidence="2">
    <location>
        <position position="1"/>
    </location>
</feature>
<feature type="chain" id="PRO_0000430805" description="Cobyrinate a,c-diamide synthase, N-terminally processed">
    <location>
        <begin position="2"/>
        <end position="459"/>
    </location>
</feature>
<feature type="domain" description="GATase cobBQ-type" evidence="1">
    <location>
        <begin position="252"/>
        <end position="446"/>
    </location>
</feature>
<feature type="active site" description="Nucleophile" evidence="1">
    <location>
        <position position="334"/>
    </location>
</feature>
<feature type="site" description="Increases nucleophilicity of active site Cys" evidence="1">
    <location>
        <position position="438"/>
    </location>
</feature>
<feature type="mutagenesis site" description="Loss of amidation activity when glutamine is used as substrate, and 750-fold reduction in amidation activity with ammonia as substrate." evidence="2">
    <original>D</original>
    <variation>N</variation>
    <location>
        <position position="45"/>
    </location>
</feature>
<feature type="mutagenesis site" description="26-fold reduction in amidation activity with glutamine as substrate. The affinity for cobyrinate is nearly not affected whereas that for the c-monoamide intermediate decreases by 27-fold." evidence="2">
    <original>Y</original>
    <variation>A</variation>
    <location>
        <position position="46"/>
    </location>
</feature>
<feature type="mutagenesis site" description="10-fold reduction in amidation activity with glutamine as substrate. The affinity for cobyrinate is nearly not affected whereas that for the c-monoamide intermediate decreases by 6-fold." evidence="2">
    <original>L</original>
    <variation>A</variation>
    <location>
        <position position="47"/>
    </location>
</feature>
<feature type="mutagenesis site" description="500-fold reduction in amidation activity with either glutamine or ammonia as substrate." evidence="2">
    <original>D</original>
    <variation>N</variation>
    <location>
        <position position="48"/>
    </location>
</feature>
<feature type="mutagenesis site" description="Loss of amidation activity with either glutamine or ammonia as substrate." evidence="2">
    <original>E</original>
    <variation>Q</variation>
    <location>
        <position position="90"/>
    </location>
</feature>
<feature type="mutagenesis site" description="3-fold reduction in amidation activity with glutamine as substrate." evidence="2">
    <original>D</original>
    <variation>N</variation>
    <location>
        <position position="97"/>
    </location>
</feature>
<feature type="sequence conflict" description="In Ref. 1; AAA27252." evidence="5" ref="1">
    <original>R</original>
    <variation>P</variation>
    <location>
        <position position="36"/>
    </location>
</feature>
<feature type="sequence conflict" description="In Ref. 1; AAA27252." evidence="5" ref="1">
    <original>M</original>
    <variation>I</variation>
    <location>
        <position position="111"/>
    </location>
</feature>
<feature type="sequence conflict" description="In Ref. 1; AAA27252." evidence="5" ref="1">
    <original>V</original>
    <variation>I</variation>
    <location>
        <position position="128"/>
    </location>
</feature>
<feature type="sequence conflict" description="In Ref. 1; AAA27252." evidence="5" ref="1">
    <original>A</original>
    <variation>T</variation>
    <location>
        <position position="133"/>
    </location>
</feature>
<sequence>MAARHHAFILAGTGSGCGKTTVTLGLLRLLQKRALRVQPFKVGPDYLDTGWHTAICGVASRNLDSFMLPPPVLNALFCEQMRQADIAVIEGVMGLYDGYGVDPNYCSTAAMAKQLGCPVILLVDGKAVSTSLAATVMGFQHFDPTLNLAGVIVNRVTSDAHYQLLKNAIEHYCSLPVLGYVPPCDGVALPERHLGLITARESLVNQQSWHDFAATLEQTVDVDALLSLSVLSALPAGMWPERPDNTAGAGLTLALADDEAFNFYYPDNIDLLERAGVNIVRFSPLHDRALPDCQMIWLGGGYPELYAADLAANTVMLKHLRAAHQRGVAIYAECGGLMYLGSTLEDSGGEIHQMANIIPGHSKMGKRLTRFGYCEAQAMQPTLLAAPGEIVRGHEFHYSDFIPETPAVMACRKVRDGRVLQEWTGGWQTGNTFASYLHVHFAQRPEMLQHWLAAARRVL</sequence>
<name>CBIA_SALTY</name>
<organism>
    <name type="scientific">Salmonella typhimurium (strain LT2 / SGSC1412 / ATCC 700720)</name>
    <dbReference type="NCBI Taxonomy" id="99287"/>
    <lineage>
        <taxon>Bacteria</taxon>
        <taxon>Pseudomonadati</taxon>
        <taxon>Pseudomonadota</taxon>
        <taxon>Gammaproteobacteria</taxon>
        <taxon>Enterobacterales</taxon>
        <taxon>Enterobacteriaceae</taxon>
        <taxon>Salmonella</taxon>
    </lineage>
</organism>
<gene>
    <name evidence="1 4" type="primary">cbiA</name>
    <name type="ordered locus">STM2035</name>
</gene>
<evidence type="ECO:0000255" key="1">
    <source>
        <dbReference type="HAMAP-Rule" id="MF_00027"/>
    </source>
</evidence>
<evidence type="ECO:0000269" key="2">
    <source>
    </source>
</evidence>
<evidence type="ECO:0000303" key="3">
    <source>
    </source>
</evidence>
<evidence type="ECO:0000303" key="4">
    <source>
    </source>
</evidence>
<evidence type="ECO:0000305" key="5"/>
<dbReference type="EC" id="6.3.5.11" evidence="1"/>
<dbReference type="EMBL" id="L12006">
    <property type="protein sequence ID" value="AAA27252.1"/>
    <property type="molecule type" value="Genomic_DNA"/>
</dbReference>
<dbReference type="EMBL" id="AE006468">
    <property type="protein sequence ID" value="AAL20939.1"/>
    <property type="molecule type" value="Genomic_DNA"/>
</dbReference>
<dbReference type="EMBL" id="X63012">
    <property type="protein sequence ID" value="CAA44740.1"/>
    <property type="molecule type" value="Genomic_DNA"/>
</dbReference>
<dbReference type="PIR" id="S20553">
    <property type="entry name" value="S20553"/>
</dbReference>
<dbReference type="RefSeq" id="NP_460980.1">
    <property type="nucleotide sequence ID" value="NC_003197.2"/>
</dbReference>
<dbReference type="RefSeq" id="WP_000741259.1">
    <property type="nucleotide sequence ID" value="NC_003197.2"/>
</dbReference>
<dbReference type="SMR" id="P29946"/>
<dbReference type="STRING" id="99287.STM2035"/>
<dbReference type="PaxDb" id="99287-STM2035"/>
<dbReference type="GeneID" id="1253556"/>
<dbReference type="KEGG" id="stm:STM2035"/>
<dbReference type="PATRIC" id="fig|99287.12.peg.2157"/>
<dbReference type="HOGENOM" id="CLU_022752_2_0_6"/>
<dbReference type="OMA" id="CDGVYLP"/>
<dbReference type="PhylomeDB" id="P29946"/>
<dbReference type="BioCyc" id="MetaCyc:MONOMER-13217"/>
<dbReference type="BioCyc" id="SENT99287:STM2035-MONOMER"/>
<dbReference type="BRENDA" id="6.3.5.11">
    <property type="organism ID" value="5542"/>
</dbReference>
<dbReference type="SABIO-RK" id="P29946"/>
<dbReference type="UniPathway" id="UPA00148">
    <property type="reaction ID" value="UER00231"/>
</dbReference>
<dbReference type="Proteomes" id="UP000001014">
    <property type="component" value="Chromosome"/>
</dbReference>
<dbReference type="GO" id="GO:0005524">
    <property type="term" value="F:ATP binding"/>
    <property type="evidence" value="ECO:0007669"/>
    <property type="project" value="UniProtKB-UniRule"/>
</dbReference>
<dbReference type="GO" id="GO:0042242">
    <property type="term" value="F:cobyrinic acid a,c-diamide synthase activity"/>
    <property type="evidence" value="ECO:0007669"/>
    <property type="project" value="UniProtKB-UniRule"/>
</dbReference>
<dbReference type="GO" id="GO:0009236">
    <property type="term" value="P:cobalamin biosynthetic process"/>
    <property type="evidence" value="ECO:0007669"/>
    <property type="project" value="UniProtKB-UniRule"/>
</dbReference>
<dbReference type="CDD" id="cd05388">
    <property type="entry name" value="CobB_N"/>
    <property type="match status" value="1"/>
</dbReference>
<dbReference type="CDD" id="cd03130">
    <property type="entry name" value="GATase1_CobB"/>
    <property type="match status" value="1"/>
</dbReference>
<dbReference type="Gene3D" id="3.40.50.880">
    <property type="match status" value="1"/>
</dbReference>
<dbReference type="Gene3D" id="3.40.50.300">
    <property type="entry name" value="P-loop containing nucleotide triphosphate hydrolases"/>
    <property type="match status" value="2"/>
</dbReference>
<dbReference type="HAMAP" id="MF_00027">
    <property type="entry name" value="CobB_CbiA"/>
    <property type="match status" value="1"/>
</dbReference>
<dbReference type="InterPro" id="IPR004484">
    <property type="entry name" value="CbiA/CobB_synth"/>
</dbReference>
<dbReference type="InterPro" id="IPR029062">
    <property type="entry name" value="Class_I_gatase-like"/>
</dbReference>
<dbReference type="InterPro" id="IPR002586">
    <property type="entry name" value="CobQ/CobB/MinD/ParA_Nub-bd_dom"/>
</dbReference>
<dbReference type="InterPro" id="IPR011698">
    <property type="entry name" value="GATase_3"/>
</dbReference>
<dbReference type="InterPro" id="IPR027417">
    <property type="entry name" value="P-loop_NTPase"/>
</dbReference>
<dbReference type="NCBIfam" id="TIGR00379">
    <property type="entry name" value="cobB"/>
    <property type="match status" value="1"/>
</dbReference>
<dbReference type="NCBIfam" id="NF002204">
    <property type="entry name" value="PRK01077.1"/>
    <property type="match status" value="1"/>
</dbReference>
<dbReference type="PANTHER" id="PTHR43873">
    <property type="entry name" value="COBYRINATE A,C-DIAMIDE SYNTHASE"/>
    <property type="match status" value="1"/>
</dbReference>
<dbReference type="PANTHER" id="PTHR43873:SF1">
    <property type="entry name" value="COBYRINATE A,C-DIAMIDE SYNTHASE"/>
    <property type="match status" value="1"/>
</dbReference>
<dbReference type="Pfam" id="PF01656">
    <property type="entry name" value="CbiA"/>
    <property type="match status" value="1"/>
</dbReference>
<dbReference type="Pfam" id="PF07685">
    <property type="entry name" value="GATase_3"/>
    <property type="match status" value="1"/>
</dbReference>
<dbReference type="SUPFAM" id="SSF52317">
    <property type="entry name" value="Class I glutamine amidotransferase-like"/>
    <property type="match status" value="1"/>
</dbReference>
<dbReference type="SUPFAM" id="SSF52540">
    <property type="entry name" value="P-loop containing nucleoside triphosphate hydrolases"/>
    <property type="match status" value="1"/>
</dbReference>
<dbReference type="PROSITE" id="PS51274">
    <property type="entry name" value="GATASE_COBBQ"/>
    <property type="match status" value="1"/>
</dbReference>
<accession>P29946</accession>
<keyword id="KW-0067">ATP-binding</keyword>
<keyword id="KW-0169">Cobalamin biosynthesis</keyword>
<keyword id="KW-0903">Direct protein sequencing</keyword>
<keyword id="KW-0315">Glutamine amidotransferase</keyword>
<keyword id="KW-0436">Ligase</keyword>
<keyword id="KW-0460">Magnesium</keyword>
<keyword id="KW-0547">Nucleotide-binding</keyword>
<keyword id="KW-1185">Reference proteome</keyword>
<comment type="function">
    <text evidence="1 2">Catalyzes the ATP-dependent amidation of the two carboxylate groups at positions a and c of cobyrinate, using either L-glutamine or ammonia as the nitrogen source. Is able to use other nucleotide triphosphates as substrate, such as GTP or UTP, although less efficiently than ATP.</text>
</comment>
<comment type="catalytic activity">
    <reaction evidence="1 2">
        <text>cob(II)yrinate + 2 L-glutamine + 2 ATP + 2 H2O = cob(II)yrinate a,c diamide + 2 L-glutamate + 2 ADP + 2 phosphate + 2 H(+)</text>
        <dbReference type="Rhea" id="RHEA:26289"/>
        <dbReference type="ChEBI" id="CHEBI:15377"/>
        <dbReference type="ChEBI" id="CHEBI:15378"/>
        <dbReference type="ChEBI" id="CHEBI:29985"/>
        <dbReference type="ChEBI" id="CHEBI:30616"/>
        <dbReference type="ChEBI" id="CHEBI:43474"/>
        <dbReference type="ChEBI" id="CHEBI:58359"/>
        <dbReference type="ChEBI" id="CHEBI:58537"/>
        <dbReference type="ChEBI" id="CHEBI:58894"/>
        <dbReference type="ChEBI" id="CHEBI:456216"/>
        <dbReference type="EC" id="6.3.5.11"/>
    </reaction>
</comment>
<comment type="cofactor">
    <cofactor evidence="1">
        <name>Mg(2+)</name>
        <dbReference type="ChEBI" id="CHEBI:18420"/>
    </cofactor>
</comment>
<comment type="biophysicochemical properties">
    <kinetics>
        <KM evidence="2">0.74 uM for cobyrinate</KM>
        <KM evidence="2">2.7 uM for ATP</KM>
        <KM evidence="2">53 uM for glutamine</KM>
        <KM evidence="2">26200 uM for ammonia</KM>
        <text evidence="2">kcat is 0.16 sec(-1).</text>
    </kinetics>
    <phDependence>
        <text evidence="2">The catalytic activity is essentially constant between pH 6.8 and 8.0.</text>
    </phDependence>
</comment>
<comment type="pathway">
    <text evidence="1 3">Cofactor biosynthesis; adenosylcobalamin biosynthesis; cob(II)yrinate a,c-diamide from sirohydrochlorin (anaerobic route): step 10/10.</text>
</comment>
<comment type="subunit">
    <text evidence="2">Monomer.</text>
</comment>
<comment type="domain">
    <text evidence="1 3">Comprises of two domains. The C-terminal domain contains the binding site for glutamine and catalyzes the hydrolysis of this substrate to glutamate and ammonia. The N-terminal domain is anticipated to bind ATP and cobyrinate and catalyzes the ultimate synthesis of the diamide product. The ammonia produced via the glutaminase domain is probably translocated to the adjacent domain via a molecular tunnel, where it reacts with an activated intermediate.</text>
</comment>
<comment type="miscellaneous">
    <text evidence="1 2">The a and c carboxylates of cobyrinate are activated for nucleophilic attack via formation of a phosphorylated intermediate by ATP. CbiA catalyzes first the amidation of the c-carboxylate, and then that of the a-carboxylate.</text>
</comment>
<comment type="similarity">
    <text evidence="1">Belongs to the CobB/CbiA family.</text>
</comment>